<name>FNR_VIBCH</name>
<protein>
    <recommendedName>
        <fullName>Fumarate and nitrate reduction regulatory protein</fullName>
    </recommendedName>
</protein>
<sequence length="250" mass="28071">MISEKPAAKRIQSGGCAIHCQDCSISQLCIPFTLNESELDQLDQIIERKKPIQKGQELFKAGDELRSLYAIRSGTIKSYTITEQGDEQITAFHLAGDLVGFDAITGDQHPSFAQALETSMVCEIPYEILDDLSGKMPKLRQQIMRLMSNEIKGDQEMILLLSKKNAEERLAAFLYNLSTRFSQRGFSPREFRLTMTRGDIGNYLGLTVETISRLLGRFQKSEILSVKGKYITILNHAELMELAGVSKESK</sequence>
<gene>
    <name type="primary">fnr</name>
    <name type="ordered locus">VC_1434</name>
</gene>
<feature type="chain" id="PRO_0000100170" description="Fumarate and nitrate reduction regulatory protein">
    <location>
        <begin position="1"/>
        <end position="250"/>
    </location>
</feature>
<feature type="domain" description="HTH crp-type" evidence="3">
    <location>
        <begin position="164"/>
        <end position="237"/>
    </location>
</feature>
<feature type="DNA-binding region" description="H-T-H motif" evidence="3">
    <location>
        <begin position="200"/>
        <end position="219"/>
    </location>
</feature>
<feature type="region of interest" description="Essential for the oxygen-regulated activity" evidence="1">
    <location>
        <begin position="23"/>
        <end position="32"/>
    </location>
</feature>
<feature type="region of interest" description="Activating region 2A" evidence="2">
    <location>
        <begin position="50"/>
        <end position="53"/>
    </location>
</feature>
<feature type="region of interest" description="Activating region 3A" evidence="2">
    <location>
        <begin position="63"/>
        <end position="64"/>
    </location>
</feature>
<feature type="region of interest" description="Activating region 1A" evidence="2">
    <location>
        <begin position="74"/>
        <end position="78"/>
    </location>
</feature>
<feature type="region of interest" description="Activating region 3B" evidence="2">
    <location>
        <position position="84"/>
    </location>
</feature>
<feature type="region of interest" description="Activating region 3C" evidence="2">
    <location>
        <begin position="88"/>
        <end position="90"/>
    </location>
</feature>
<feature type="region of interest" description="Activating region 3D" evidence="2">
    <location>
        <position position="115"/>
    </location>
</feature>
<feature type="region of interest" description="Activating region 1B" evidence="2">
    <location>
        <begin position="119"/>
        <end position="124"/>
    </location>
</feature>
<feature type="region of interest" description="Activating region 2B" evidence="2">
    <location>
        <begin position="126"/>
        <end position="127"/>
    </location>
</feature>
<feature type="region of interest" description="Activating region 2C" evidence="2">
    <location>
        <begin position="130"/>
        <end position="131"/>
    </location>
</feature>
<feature type="region of interest" description="Dimerization" evidence="2">
    <location>
        <begin position="143"/>
        <end position="162"/>
    </location>
</feature>
<feature type="region of interest" description="Activating region 1C" evidence="2">
    <location>
        <begin position="184"/>
        <end position="194"/>
    </location>
</feature>
<feature type="binding site" evidence="2">
    <location>
        <position position="20"/>
    </location>
    <ligand>
        <name>[4Fe-4S] cluster</name>
        <dbReference type="ChEBI" id="CHEBI:49883"/>
    </ligand>
</feature>
<feature type="binding site" evidence="2">
    <location>
        <position position="23"/>
    </location>
    <ligand>
        <name>[4Fe-4S] cluster</name>
        <dbReference type="ChEBI" id="CHEBI:49883"/>
    </ligand>
</feature>
<feature type="binding site" evidence="2">
    <location>
        <position position="29"/>
    </location>
    <ligand>
        <name>[4Fe-4S] cluster</name>
        <dbReference type="ChEBI" id="CHEBI:49883"/>
    </ligand>
</feature>
<feature type="binding site" evidence="2">
    <location>
        <position position="122"/>
    </location>
    <ligand>
        <name>[4Fe-4S] cluster</name>
        <dbReference type="ChEBI" id="CHEBI:49883"/>
    </ligand>
</feature>
<dbReference type="EMBL" id="AE003852">
    <property type="protein sequence ID" value="AAF94591.1"/>
    <property type="molecule type" value="Genomic_DNA"/>
</dbReference>
<dbReference type="PIR" id="F82199">
    <property type="entry name" value="F82199"/>
</dbReference>
<dbReference type="RefSeq" id="NP_231077.1">
    <property type="nucleotide sequence ID" value="NC_002505.1"/>
</dbReference>
<dbReference type="RefSeq" id="WP_000622582.1">
    <property type="nucleotide sequence ID" value="NZ_LT906614.1"/>
</dbReference>
<dbReference type="SMR" id="P0C6D0"/>
<dbReference type="STRING" id="243277.VC_1434"/>
<dbReference type="DNASU" id="2614066"/>
<dbReference type="EnsemblBacteria" id="AAF94591">
    <property type="protein sequence ID" value="AAF94591"/>
    <property type="gene ID" value="VC_1434"/>
</dbReference>
<dbReference type="KEGG" id="vch:VC_1434"/>
<dbReference type="PATRIC" id="fig|243277.26.peg.1364"/>
<dbReference type="eggNOG" id="COG0664">
    <property type="taxonomic scope" value="Bacteria"/>
</dbReference>
<dbReference type="HOGENOM" id="CLU_075053_0_2_6"/>
<dbReference type="Proteomes" id="UP000000584">
    <property type="component" value="Chromosome 1"/>
</dbReference>
<dbReference type="GO" id="GO:0005829">
    <property type="term" value="C:cytosol"/>
    <property type="evidence" value="ECO:0000318"/>
    <property type="project" value="GO_Central"/>
</dbReference>
<dbReference type="GO" id="GO:0051539">
    <property type="term" value="F:4 iron, 4 sulfur cluster binding"/>
    <property type="evidence" value="ECO:0007669"/>
    <property type="project" value="UniProtKB-KW"/>
</dbReference>
<dbReference type="GO" id="GO:0003677">
    <property type="term" value="F:DNA binding"/>
    <property type="evidence" value="ECO:0007669"/>
    <property type="project" value="UniProtKB-KW"/>
</dbReference>
<dbReference type="GO" id="GO:0003700">
    <property type="term" value="F:DNA-binding transcription factor activity"/>
    <property type="evidence" value="ECO:0000318"/>
    <property type="project" value="GO_Central"/>
</dbReference>
<dbReference type="GO" id="GO:0046872">
    <property type="term" value="F:metal ion binding"/>
    <property type="evidence" value="ECO:0007669"/>
    <property type="project" value="UniProtKB-KW"/>
</dbReference>
<dbReference type="CDD" id="cd00038">
    <property type="entry name" value="CAP_ED"/>
    <property type="match status" value="1"/>
</dbReference>
<dbReference type="CDD" id="cd00092">
    <property type="entry name" value="HTH_CRP"/>
    <property type="match status" value="1"/>
</dbReference>
<dbReference type="FunFam" id="1.10.10.10:FF:000028">
    <property type="entry name" value="Fumarate/nitrate reduction transcriptional regulator Fnr"/>
    <property type="match status" value="1"/>
</dbReference>
<dbReference type="FunFam" id="2.60.120.10:FF:000004">
    <property type="entry name" value="Fumarate/nitrate reduction transcriptional regulator Fnr"/>
    <property type="match status" value="1"/>
</dbReference>
<dbReference type="Gene3D" id="2.60.120.10">
    <property type="entry name" value="Jelly Rolls"/>
    <property type="match status" value="1"/>
</dbReference>
<dbReference type="Gene3D" id="1.10.10.10">
    <property type="entry name" value="Winged helix-like DNA-binding domain superfamily/Winged helix DNA-binding domain"/>
    <property type="match status" value="1"/>
</dbReference>
<dbReference type="InterPro" id="IPR000595">
    <property type="entry name" value="cNMP-bd_dom"/>
</dbReference>
<dbReference type="InterPro" id="IPR018490">
    <property type="entry name" value="cNMP-bd_dom_sf"/>
</dbReference>
<dbReference type="InterPro" id="IPR050397">
    <property type="entry name" value="Env_Response_Regulators"/>
</dbReference>
<dbReference type="InterPro" id="IPR012318">
    <property type="entry name" value="HTH_CRP"/>
</dbReference>
<dbReference type="InterPro" id="IPR014710">
    <property type="entry name" value="RmlC-like_jellyroll"/>
</dbReference>
<dbReference type="InterPro" id="IPR018335">
    <property type="entry name" value="Tscrpt_reg_HTH_Crp-type_CS"/>
</dbReference>
<dbReference type="InterPro" id="IPR036388">
    <property type="entry name" value="WH-like_DNA-bd_sf"/>
</dbReference>
<dbReference type="InterPro" id="IPR036390">
    <property type="entry name" value="WH_DNA-bd_sf"/>
</dbReference>
<dbReference type="NCBIfam" id="NF008365">
    <property type="entry name" value="PRK11161.1"/>
    <property type="match status" value="1"/>
</dbReference>
<dbReference type="PANTHER" id="PTHR24567">
    <property type="entry name" value="CRP FAMILY TRANSCRIPTIONAL REGULATORY PROTEIN"/>
    <property type="match status" value="1"/>
</dbReference>
<dbReference type="PANTHER" id="PTHR24567:SF75">
    <property type="entry name" value="FUMARATE AND NITRATE REDUCTION REGULATORY PROTEIN"/>
    <property type="match status" value="1"/>
</dbReference>
<dbReference type="Pfam" id="PF00027">
    <property type="entry name" value="cNMP_binding"/>
    <property type="match status" value="1"/>
</dbReference>
<dbReference type="Pfam" id="PF13545">
    <property type="entry name" value="HTH_Crp_2"/>
    <property type="match status" value="1"/>
</dbReference>
<dbReference type="PRINTS" id="PR00034">
    <property type="entry name" value="HTHCRP"/>
</dbReference>
<dbReference type="SMART" id="SM00100">
    <property type="entry name" value="cNMP"/>
    <property type="match status" value="1"/>
</dbReference>
<dbReference type="SMART" id="SM00419">
    <property type="entry name" value="HTH_CRP"/>
    <property type="match status" value="1"/>
</dbReference>
<dbReference type="SUPFAM" id="SSF51206">
    <property type="entry name" value="cAMP-binding domain-like"/>
    <property type="match status" value="1"/>
</dbReference>
<dbReference type="SUPFAM" id="SSF46785">
    <property type="entry name" value="Winged helix' DNA-binding domain"/>
    <property type="match status" value="1"/>
</dbReference>
<dbReference type="PROSITE" id="PS50042">
    <property type="entry name" value="CNMP_BINDING_3"/>
    <property type="match status" value="1"/>
</dbReference>
<dbReference type="PROSITE" id="PS00042">
    <property type="entry name" value="HTH_CRP_1"/>
    <property type="match status" value="1"/>
</dbReference>
<dbReference type="PROSITE" id="PS51063">
    <property type="entry name" value="HTH_CRP_2"/>
    <property type="match status" value="1"/>
</dbReference>
<comment type="function">
    <text evidence="1">Global transcription factor that controls the expression of over 100 target genes in response to anoxia. It facilitates the adaptation to anaerobic growth conditions by regulating the expression of gene products that are involved in anaerobic energy metabolism. When the terminal electron acceptor, O(2), is no longer available, it represses the synthesis of enzymes involved in aerobic respiration and increases the synthesis of enzymes required for anaerobic respiration (By similarity).</text>
</comment>
<comment type="cofactor">
    <cofactor evidence="1">
        <name>[4Fe-4S] cluster</name>
        <dbReference type="ChEBI" id="CHEBI:49883"/>
    </cofactor>
    <text evidence="1">Binds 1 [4Fe-4S] cluster per subunit.</text>
</comment>
<comment type="subunit">
    <text evidence="1">Homodimer.</text>
</comment>
<comment type="subcellular location">
    <subcellularLocation>
        <location evidence="4">Cytoplasm</location>
    </subcellularLocation>
</comment>
<evidence type="ECO:0000250" key="1"/>
<evidence type="ECO:0000255" key="2"/>
<evidence type="ECO:0000255" key="3">
    <source>
        <dbReference type="PROSITE-ProRule" id="PRU00387"/>
    </source>
</evidence>
<evidence type="ECO:0000305" key="4"/>
<keyword id="KW-0004">4Fe-4S</keyword>
<keyword id="KW-0010">Activator</keyword>
<keyword id="KW-0963">Cytoplasm</keyword>
<keyword id="KW-0238">DNA-binding</keyword>
<keyword id="KW-0408">Iron</keyword>
<keyword id="KW-0411">Iron-sulfur</keyword>
<keyword id="KW-0479">Metal-binding</keyword>
<keyword id="KW-1185">Reference proteome</keyword>
<keyword id="KW-0678">Repressor</keyword>
<keyword id="KW-0804">Transcription</keyword>
<keyword id="KW-0805">Transcription regulation</keyword>
<proteinExistence type="inferred from homology"/>
<accession>P0C6D0</accession>
<accession>Q9KS27</accession>
<reference key="1">
    <citation type="journal article" date="2000" name="Nature">
        <title>DNA sequence of both chromosomes of the cholera pathogen Vibrio cholerae.</title>
        <authorList>
            <person name="Heidelberg J.F."/>
            <person name="Eisen J.A."/>
            <person name="Nelson W.C."/>
            <person name="Clayton R.A."/>
            <person name="Gwinn M.L."/>
            <person name="Dodson R.J."/>
            <person name="Haft D.H."/>
            <person name="Hickey E.K."/>
            <person name="Peterson J.D."/>
            <person name="Umayam L.A."/>
            <person name="Gill S.R."/>
            <person name="Nelson K.E."/>
            <person name="Read T.D."/>
            <person name="Tettelin H."/>
            <person name="Richardson D.L."/>
            <person name="Ermolaeva M.D."/>
            <person name="Vamathevan J.J."/>
            <person name="Bass S."/>
            <person name="Qin H."/>
            <person name="Dragoi I."/>
            <person name="Sellers P."/>
            <person name="McDonald L.A."/>
            <person name="Utterback T.R."/>
            <person name="Fleischmann R.D."/>
            <person name="Nierman W.C."/>
            <person name="White O."/>
            <person name="Salzberg S.L."/>
            <person name="Smith H.O."/>
            <person name="Colwell R.R."/>
            <person name="Mekalanos J.J."/>
            <person name="Venter J.C."/>
            <person name="Fraser C.M."/>
        </authorList>
    </citation>
    <scope>NUCLEOTIDE SEQUENCE [LARGE SCALE GENOMIC DNA]</scope>
    <source>
        <strain>ATCC 39315 / El Tor Inaba N16961</strain>
    </source>
</reference>
<organism>
    <name type="scientific">Vibrio cholerae serotype O1 (strain ATCC 39315 / El Tor Inaba N16961)</name>
    <dbReference type="NCBI Taxonomy" id="243277"/>
    <lineage>
        <taxon>Bacteria</taxon>
        <taxon>Pseudomonadati</taxon>
        <taxon>Pseudomonadota</taxon>
        <taxon>Gammaproteobacteria</taxon>
        <taxon>Vibrionales</taxon>
        <taxon>Vibrionaceae</taxon>
        <taxon>Vibrio</taxon>
    </lineage>
</organism>